<dbReference type="EMBL" id="CP001404">
    <property type="protein sequence ID" value="ACP49877.1"/>
    <property type="molecule type" value="Genomic_DNA"/>
</dbReference>
<dbReference type="RefSeq" id="WP_012714583.1">
    <property type="nucleotide sequence ID" value="NC_012623.1"/>
</dbReference>
<dbReference type="GeneID" id="7811021"/>
<dbReference type="KEGG" id="sin:YN1551_2990"/>
<dbReference type="HOGENOM" id="CLU_172276_0_0_2"/>
<dbReference type="Proteomes" id="UP000006818">
    <property type="component" value="Chromosome"/>
</dbReference>
<dbReference type="HAMAP" id="MF_01245">
    <property type="entry name" value="UPF0248"/>
    <property type="match status" value="1"/>
</dbReference>
<dbReference type="InterPro" id="IPR040459">
    <property type="entry name" value="MJ1316"/>
</dbReference>
<dbReference type="InterPro" id="IPR007547">
    <property type="entry name" value="UPF0248"/>
</dbReference>
<dbReference type="Pfam" id="PF04457">
    <property type="entry name" value="MJ1316"/>
    <property type="match status" value="1"/>
</dbReference>
<sequence length="80" mass="9641">MKIKDAVNMIRWEYREKIDDYVIIIIDRLTENGLKEISFSELDAVDNNYLYLKSEENTVIPLHRVLMIKRKSDNALIWKR</sequence>
<protein>
    <recommendedName>
        <fullName evidence="1">UPF0248 protein YN1551_2990</fullName>
    </recommendedName>
</protein>
<comment type="similarity">
    <text evidence="1">Belongs to the UPF0248 family.</text>
</comment>
<name>Y2990_SACI1</name>
<feature type="chain" id="PRO_1000214097" description="UPF0248 protein YN1551_2990">
    <location>
        <begin position="1"/>
        <end position="80"/>
    </location>
</feature>
<accession>C3NFE3</accession>
<evidence type="ECO:0000255" key="1">
    <source>
        <dbReference type="HAMAP-Rule" id="MF_01245"/>
    </source>
</evidence>
<gene>
    <name type="ordered locus">YN1551_2990</name>
</gene>
<organism>
    <name type="scientific">Saccharolobus islandicus (strain Y.N.15.51 / Yellowstone #2)</name>
    <name type="common">Sulfolobus islandicus</name>
    <dbReference type="NCBI Taxonomy" id="419942"/>
    <lineage>
        <taxon>Archaea</taxon>
        <taxon>Thermoproteota</taxon>
        <taxon>Thermoprotei</taxon>
        <taxon>Sulfolobales</taxon>
        <taxon>Sulfolobaceae</taxon>
        <taxon>Saccharolobus</taxon>
    </lineage>
</organism>
<reference key="1">
    <citation type="journal article" date="2009" name="Proc. Natl. Acad. Sci. U.S.A.">
        <title>Biogeography of the Sulfolobus islandicus pan-genome.</title>
        <authorList>
            <person name="Reno M.L."/>
            <person name="Held N.L."/>
            <person name="Fields C.J."/>
            <person name="Burke P.V."/>
            <person name="Whitaker R.J."/>
        </authorList>
    </citation>
    <scope>NUCLEOTIDE SEQUENCE [LARGE SCALE GENOMIC DNA]</scope>
    <source>
        <strain>Y.N.15.51 / Yellowstone #2</strain>
    </source>
</reference>
<proteinExistence type="inferred from homology"/>